<proteinExistence type="evidence at transcript level"/>
<protein>
    <recommendedName>
        <fullName>Plasma alpha-L-fucosidase</fullName>
        <ecNumber>3.2.1.51</ecNumber>
    </recommendedName>
    <alternativeName>
        <fullName>Alpha-L-fucoside fucohydrolase 2</fullName>
        <shortName>Alpha-L-fucosidase 2</shortName>
    </alternativeName>
</protein>
<keyword id="KW-0325">Glycoprotein</keyword>
<keyword id="KW-0326">Glycosidase</keyword>
<keyword id="KW-0378">Hydrolase</keyword>
<keyword id="KW-0597">Phosphoprotein</keyword>
<keyword id="KW-1185">Reference proteome</keyword>
<keyword id="KW-0964">Secreted</keyword>
<keyword id="KW-0732">Signal</keyword>
<accession>Q6AYS4</accession>
<dbReference type="EC" id="3.2.1.51"/>
<dbReference type="EMBL" id="BC078933">
    <property type="protein sequence ID" value="AAH78933.1"/>
    <property type="molecule type" value="mRNA"/>
</dbReference>
<dbReference type="RefSeq" id="NP_001004218.1">
    <property type="nucleotide sequence ID" value="NM_001004218.1"/>
</dbReference>
<dbReference type="SMR" id="Q6AYS4"/>
<dbReference type="FunCoup" id="Q6AYS4">
    <property type="interactions" value="507"/>
</dbReference>
<dbReference type="STRING" id="10116.ENSRNOP00000020946"/>
<dbReference type="CAZy" id="GH29">
    <property type="family name" value="Glycoside Hydrolase Family 29"/>
</dbReference>
<dbReference type="GlyCosmos" id="Q6AYS4">
    <property type="glycosylation" value="3 sites, No reported glycans"/>
</dbReference>
<dbReference type="GlyGen" id="Q6AYS4">
    <property type="glycosylation" value="3 sites"/>
</dbReference>
<dbReference type="PhosphoSitePlus" id="Q6AYS4"/>
<dbReference type="jPOST" id="Q6AYS4"/>
<dbReference type="PaxDb" id="10116-ENSRNOP00000020946"/>
<dbReference type="GeneID" id="292485"/>
<dbReference type="KEGG" id="rno:292485"/>
<dbReference type="UCSC" id="RGD:1303053">
    <property type="organism name" value="rat"/>
</dbReference>
<dbReference type="AGR" id="RGD:1303053"/>
<dbReference type="CTD" id="2519"/>
<dbReference type="RGD" id="1303053">
    <property type="gene designation" value="Fuca2"/>
</dbReference>
<dbReference type="VEuPathDB" id="HostDB:ENSRNOG00000015551"/>
<dbReference type="eggNOG" id="KOG3340">
    <property type="taxonomic scope" value="Eukaryota"/>
</dbReference>
<dbReference type="HOGENOM" id="CLU_002934_1_1_1"/>
<dbReference type="InParanoid" id="Q6AYS4"/>
<dbReference type="OrthoDB" id="6039950at2759"/>
<dbReference type="PhylomeDB" id="Q6AYS4"/>
<dbReference type="TreeFam" id="TF313034"/>
<dbReference type="BRENDA" id="3.2.1.51">
    <property type="organism ID" value="5301"/>
</dbReference>
<dbReference type="Reactome" id="R-RNO-381426">
    <property type="pathway name" value="Regulation of Insulin-like Growth Factor (IGF) transport and uptake by Insulin-like Growth Factor Binding Proteins (IGFBPs)"/>
</dbReference>
<dbReference type="Reactome" id="R-RNO-6798695">
    <property type="pathway name" value="Neutrophil degranulation"/>
</dbReference>
<dbReference type="Reactome" id="R-RNO-8957275">
    <property type="pathway name" value="Post-translational protein phosphorylation"/>
</dbReference>
<dbReference type="PRO" id="PR:Q6AYS4"/>
<dbReference type="Proteomes" id="UP000002494">
    <property type="component" value="Chromosome 1"/>
</dbReference>
<dbReference type="Bgee" id="ENSRNOG00000015551">
    <property type="expression patterns" value="Expressed in pancreas and 20 other cell types or tissues"/>
</dbReference>
<dbReference type="GO" id="GO:0005615">
    <property type="term" value="C:extracellular space"/>
    <property type="evidence" value="ECO:0000266"/>
    <property type="project" value="RGD"/>
</dbReference>
<dbReference type="GO" id="GO:0005764">
    <property type="term" value="C:lysosome"/>
    <property type="evidence" value="ECO:0000318"/>
    <property type="project" value="GO_Central"/>
</dbReference>
<dbReference type="GO" id="GO:0004560">
    <property type="term" value="F:alpha-L-fucosidase activity"/>
    <property type="evidence" value="ECO:0000266"/>
    <property type="project" value="RGD"/>
</dbReference>
<dbReference type="GO" id="GO:0006004">
    <property type="term" value="P:fucose metabolic process"/>
    <property type="evidence" value="ECO:0000266"/>
    <property type="project" value="RGD"/>
</dbReference>
<dbReference type="GO" id="GO:0016139">
    <property type="term" value="P:glycoside catabolic process"/>
    <property type="evidence" value="ECO:0000266"/>
    <property type="project" value="RGD"/>
</dbReference>
<dbReference type="GO" id="GO:2000535">
    <property type="term" value="P:regulation of entry of bacterium into host cell"/>
    <property type="evidence" value="ECO:0007669"/>
    <property type="project" value="Ensembl"/>
</dbReference>
<dbReference type="GO" id="GO:0009617">
    <property type="term" value="P:response to bacterium"/>
    <property type="evidence" value="ECO:0007669"/>
    <property type="project" value="Ensembl"/>
</dbReference>
<dbReference type="FunFam" id="2.60.40.1180:FF:000013">
    <property type="entry name" value="Alpha-L-fucosidase"/>
    <property type="match status" value="1"/>
</dbReference>
<dbReference type="FunFam" id="3.20.20.80:FF:000027">
    <property type="entry name" value="Alpha-L-fucosidase"/>
    <property type="match status" value="1"/>
</dbReference>
<dbReference type="Gene3D" id="3.20.20.80">
    <property type="entry name" value="Glycosidases"/>
    <property type="match status" value="1"/>
</dbReference>
<dbReference type="Gene3D" id="2.60.40.1180">
    <property type="entry name" value="Golgi alpha-mannosidase II"/>
    <property type="match status" value="1"/>
</dbReference>
<dbReference type="InterPro" id="IPR016286">
    <property type="entry name" value="FUC_metazoa-typ"/>
</dbReference>
<dbReference type="InterPro" id="IPR031919">
    <property type="entry name" value="Fucosidase_C"/>
</dbReference>
<dbReference type="InterPro" id="IPR000933">
    <property type="entry name" value="Glyco_hydro_29"/>
</dbReference>
<dbReference type="InterPro" id="IPR018526">
    <property type="entry name" value="Glyco_hydro_29_CS"/>
</dbReference>
<dbReference type="InterPro" id="IPR013780">
    <property type="entry name" value="Glyco_hydro_b"/>
</dbReference>
<dbReference type="InterPro" id="IPR017853">
    <property type="entry name" value="Glycoside_hydrolase_SF"/>
</dbReference>
<dbReference type="PANTHER" id="PTHR10030">
    <property type="entry name" value="ALPHA-L-FUCOSIDASE"/>
    <property type="match status" value="1"/>
</dbReference>
<dbReference type="PANTHER" id="PTHR10030:SF45">
    <property type="entry name" value="PLASMA ALPHA-L-FUCOSIDASE"/>
    <property type="match status" value="1"/>
</dbReference>
<dbReference type="Pfam" id="PF01120">
    <property type="entry name" value="Alpha_L_fucos"/>
    <property type="match status" value="1"/>
</dbReference>
<dbReference type="Pfam" id="PF16757">
    <property type="entry name" value="Fucosidase_C"/>
    <property type="match status" value="1"/>
</dbReference>
<dbReference type="PIRSF" id="PIRSF001092">
    <property type="entry name" value="Alpha-L-fucosidase"/>
    <property type="match status" value="1"/>
</dbReference>
<dbReference type="PRINTS" id="PR00741">
    <property type="entry name" value="GLHYDRLASE29"/>
</dbReference>
<dbReference type="SMART" id="SM00812">
    <property type="entry name" value="Alpha_L_fucos"/>
    <property type="match status" value="1"/>
</dbReference>
<dbReference type="SUPFAM" id="SSF51445">
    <property type="entry name" value="(Trans)glycosidases"/>
    <property type="match status" value="1"/>
</dbReference>
<dbReference type="PROSITE" id="PS00385">
    <property type="entry name" value="ALPHA_L_FUCOSIDASE"/>
    <property type="match status" value="1"/>
</dbReference>
<evidence type="ECO:0000250" key="1"/>
<evidence type="ECO:0000250" key="2">
    <source>
        <dbReference type="UniProtKB" id="Q9BTY2"/>
    </source>
</evidence>
<evidence type="ECO:0000255" key="3"/>
<evidence type="ECO:0000255" key="4">
    <source>
        <dbReference type="PROSITE-ProRule" id="PRU10054"/>
    </source>
</evidence>
<evidence type="ECO:0000305" key="5"/>
<name>FUCO2_RAT</name>
<comment type="function">
    <text>Alpha-L-fucosidase is responsible for hydrolyzing the alpha-1,6-linked fucose joined to the reducing-end N-acetylglucosamine of the carbohydrate moieties of glycoproteins.</text>
</comment>
<comment type="catalytic activity">
    <reaction evidence="4">
        <text>an alpha-L-fucoside + H2O = L-fucose + an alcohol</text>
        <dbReference type="Rhea" id="RHEA:12288"/>
        <dbReference type="ChEBI" id="CHEBI:2181"/>
        <dbReference type="ChEBI" id="CHEBI:15377"/>
        <dbReference type="ChEBI" id="CHEBI:28349"/>
        <dbReference type="ChEBI" id="CHEBI:30879"/>
        <dbReference type="EC" id="3.2.1.51"/>
    </reaction>
</comment>
<comment type="subunit">
    <text evidence="1">Homotetramer.</text>
</comment>
<comment type="subcellular location">
    <subcellularLocation>
        <location evidence="5">Secreted</location>
    </subcellularLocation>
</comment>
<comment type="similarity">
    <text evidence="5">Belongs to the glycosyl hydrolase 29 family.</text>
</comment>
<reference key="1">
    <citation type="journal article" date="2004" name="Genome Res.">
        <title>The status, quality, and expansion of the NIH full-length cDNA project: the Mammalian Gene Collection (MGC).</title>
        <authorList>
            <consortium name="The MGC Project Team"/>
        </authorList>
    </citation>
    <scope>NUCLEOTIDE SEQUENCE [LARGE SCALE MRNA]</scope>
    <source>
        <tissue>Kidney</tissue>
    </source>
</reference>
<feature type="signal peptide" evidence="3">
    <location>
        <begin position="1"/>
        <end position="23"/>
    </location>
</feature>
<feature type="chain" id="PRO_0000010315" description="Plasma alpha-L-fucosidase">
    <location>
        <begin position="24"/>
        <end position="459"/>
    </location>
</feature>
<feature type="site" description="May be important for catalysis" evidence="4">
    <location>
        <position position="286"/>
    </location>
</feature>
<feature type="modified residue" description="Phosphoserine" evidence="2">
    <location>
        <position position="293"/>
    </location>
</feature>
<feature type="glycosylation site" description="N-linked (GlcNAc...) asparagine" evidence="3">
    <location>
        <position position="163"/>
    </location>
</feature>
<feature type="glycosylation site" description="N-linked (GlcNAc...) asparagine" evidence="3">
    <location>
        <position position="231"/>
    </location>
</feature>
<feature type="glycosylation site" description="N-linked (GlcNAc...) asparagine" evidence="3">
    <location>
        <position position="369"/>
    </location>
</feature>
<sequence>MRLGLLMFLPLLLLATRYRAVTALSYDPTWESLDRRPLPAWFDQAKFGIFIHWGVFSVPSFGSEWFWWYWQKERRPKFVDFMDNNYPPGFKYEDFGVLFTAKYFNANQWADLLQASGAKYVVLTSKHHEGFTLWGSAHSWNWNAVDEGPKRDIVKELEVAVRNRTDLHFGLYYSLFEWFHPLFLEDQSSAFQKQRFPVAKTLPELYELVTKYQPEVLWSDGDGGAPDHYWNSTDFLAWLYNESPVRDTVVTNDRWGAGSICKHGGYYTCSDRYNPGHLLPHKWENCMTIDKFSWGYRREAEIGDYLTIEELVKQLVETVSCGGNLLMNIGPTLDGIIPVIFEERLRQMGTWLKVNGEAIYETHTWRSQNDTVTPDVWYTSKPEKKLVYAIFLKWPISGKLFLGQPIGSLGETEVELLGHGRPLTWTSSKPSGIVVELPRLSVHQMPCKWGWTLALTNVT</sequence>
<organism>
    <name type="scientific">Rattus norvegicus</name>
    <name type="common">Rat</name>
    <dbReference type="NCBI Taxonomy" id="10116"/>
    <lineage>
        <taxon>Eukaryota</taxon>
        <taxon>Metazoa</taxon>
        <taxon>Chordata</taxon>
        <taxon>Craniata</taxon>
        <taxon>Vertebrata</taxon>
        <taxon>Euteleostomi</taxon>
        <taxon>Mammalia</taxon>
        <taxon>Eutheria</taxon>
        <taxon>Euarchontoglires</taxon>
        <taxon>Glires</taxon>
        <taxon>Rodentia</taxon>
        <taxon>Myomorpha</taxon>
        <taxon>Muroidea</taxon>
        <taxon>Muridae</taxon>
        <taxon>Murinae</taxon>
        <taxon>Rattus</taxon>
    </lineage>
</organism>
<gene>
    <name type="primary">Fuca2</name>
</gene>